<comment type="subcellular location">
    <subcellularLocation>
        <location evidence="3">Endoplasmic reticulum membrane</location>
        <topology evidence="3">Single-pass type II membrane protein</topology>
    </subcellularLocation>
</comment>
<comment type="tissue specificity">
    <text evidence="2 3">Expressed in kidney, testis, lung, heart, stomach, intestine, pancreas, liver and salivary gland. Strongly expressed in acute pancreatitis, brain, and in peripheral endothelial cells.</text>
</comment>
<comment type="PTM">
    <text>Among the many cysteines in the lumenal domain, most are probably involved in disulfide bonds.</text>
</comment>
<comment type="similarity">
    <text evidence="4">Belongs to the DIPK family.</text>
</comment>
<comment type="sequence caution" evidence="4">
    <conflict type="erroneous initiation">
        <sequence resource="EMBL-CDS" id="AAH51954"/>
    </conflict>
    <text>Truncated N-terminus.</text>
</comment>
<comment type="sequence caution" evidence="4">
    <conflict type="erroneous initiation">
        <sequence resource="EMBL-CDS" id="AAH60081"/>
    </conflict>
    <text>Truncated N-terminus.</text>
</comment>
<comment type="sequence caution" evidence="4">
    <conflict type="erroneous initiation">
        <sequence resource="EMBL-CDS" id="AAI16752"/>
    </conflict>
    <text>Truncated N-terminus.</text>
</comment>
<comment type="sequence caution" evidence="4">
    <conflict type="frameshift">
        <sequence resource="EMBL-CDS" id="BAA92750"/>
    </conflict>
</comment>
<protein>
    <recommendedName>
        <fullName evidence="4">Divergent protein kinase domain 1B</fullName>
    </recommendedName>
    <alternativeName>
        <fullName>Pancreatitis-induced protein 49</fullName>
    </alternativeName>
    <alternativeName>
        <fullName>Protein FAM69B</fullName>
    </alternativeName>
</protein>
<proteinExistence type="evidence at protein level"/>
<keyword id="KW-1015">Disulfide bond</keyword>
<keyword id="KW-0256">Endoplasmic reticulum</keyword>
<keyword id="KW-0472">Membrane</keyword>
<keyword id="KW-1185">Reference proteome</keyword>
<keyword id="KW-0735">Signal-anchor</keyword>
<keyword id="KW-0812">Transmembrane</keyword>
<keyword id="KW-1133">Transmembrane helix</keyword>
<name>DIK1B_MOUSE</name>
<evidence type="ECO:0000255" key="1"/>
<evidence type="ECO:0000269" key="2">
    <source>
    </source>
</evidence>
<evidence type="ECO:0000269" key="3">
    <source>
    </source>
</evidence>
<evidence type="ECO:0000305" key="4"/>
<evidence type="ECO:0000305" key="5">
    <source>
    </source>
</evidence>
<dbReference type="EMBL" id="AB030186">
    <property type="protein sequence ID" value="BAA92750.1"/>
    <property type="status" value="ALT_FRAME"/>
    <property type="molecule type" value="mRNA"/>
</dbReference>
<dbReference type="EMBL" id="AF332189">
    <property type="protein sequence ID" value="AAK17190.1"/>
    <property type="molecule type" value="mRNA"/>
</dbReference>
<dbReference type="EMBL" id="AK045880">
    <property type="protein sequence ID" value="BAC32519.1"/>
    <property type="molecule type" value="mRNA"/>
</dbReference>
<dbReference type="EMBL" id="AL732311">
    <property type="status" value="NOT_ANNOTATED_CDS"/>
    <property type="molecule type" value="Genomic_DNA"/>
</dbReference>
<dbReference type="EMBL" id="BC051954">
    <property type="protein sequence ID" value="AAH51954.2"/>
    <property type="status" value="ALT_INIT"/>
    <property type="molecule type" value="mRNA"/>
</dbReference>
<dbReference type="EMBL" id="BC060081">
    <property type="protein sequence ID" value="AAH60081.2"/>
    <property type="status" value="ALT_INIT"/>
    <property type="molecule type" value="mRNA"/>
</dbReference>
<dbReference type="EMBL" id="BC116751">
    <property type="protein sequence ID" value="AAI16752.1"/>
    <property type="status" value="ALT_INIT"/>
    <property type="molecule type" value="mRNA"/>
</dbReference>
<dbReference type="CCDS" id="CCDS50542.1"/>
<dbReference type="RefSeq" id="NP_062807.2">
    <property type="nucleotide sequence ID" value="NM_019833.3"/>
</dbReference>
<dbReference type="SMR" id="Q99ML4"/>
<dbReference type="FunCoup" id="Q99ML4">
    <property type="interactions" value="21"/>
</dbReference>
<dbReference type="STRING" id="10090.ENSMUSP00000073860"/>
<dbReference type="PhosphoSitePlus" id="Q99ML4"/>
<dbReference type="SwissPalm" id="Q99ML4"/>
<dbReference type="PaxDb" id="10090-ENSMUSP00000073860"/>
<dbReference type="ProteomicsDB" id="266827"/>
<dbReference type="Pumba" id="Q99ML4"/>
<dbReference type="Antibodypedia" id="53284">
    <property type="antibodies" value="48 antibodies from 14 providers"/>
</dbReference>
<dbReference type="DNASU" id="56279"/>
<dbReference type="Ensembl" id="ENSMUST00000074240.4">
    <property type="protein sequence ID" value="ENSMUSP00000073860.4"/>
    <property type="gene ID" value="ENSMUSG00000036186.6"/>
</dbReference>
<dbReference type="GeneID" id="56279"/>
<dbReference type="KEGG" id="mmu:56279"/>
<dbReference type="UCSC" id="uc008ivx.2">
    <property type="organism name" value="mouse"/>
</dbReference>
<dbReference type="AGR" id="MGI:1927576"/>
<dbReference type="CTD" id="138311"/>
<dbReference type="MGI" id="MGI:1927576">
    <property type="gene designation" value="Dipk1b"/>
</dbReference>
<dbReference type="VEuPathDB" id="HostDB:ENSMUSG00000036186"/>
<dbReference type="eggNOG" id="ENOG502QU5P">
    <property type="taxonomic scope" value="Eukaryota"/>
</dbReference>
<dbReference type="GeneTree" id="ENSGT00390000006452"/>
<dbReference type="HOGENOM" id="CLU_039177_0_0_1"/>
<dbReference type="InParanoid" id="Q99ML4"/>
<dbReference type="OMA" id="WALLHIN"/>
<dbReference type="OrthoDB" id="8860232at2759"/>
<dbReference type="PhylomeDB" id="Q99ML4"/>
<dbReference type="TreeFam" id="TF313319"/>
<dbReference type="BioGRID-ORCS" id="56279">
    <property type="hits" value="1 hit in 77 CRISPR screens"/>
</dbReference>
<dbReference type="PRO" id="PR:Q99ML4"/>
<dbReference type="Proteomes" id="UP000000589">
    <property type="component" value="Chromosome 2"/>
</dbReference>
<dbReference type="RNAct" id="Q99ML4">
    <property type="molecule type" value="protein"/>
</dbReference>
<dbReference type="Bgee" id="ENSMUSG00000036186">
    <property type="expression patterns" value="Expressed in facial nucleus and 203 other cell types or tissues"/>
</dbReference>
<dbReference type="GO" id="GO:0005789">
    <property type="term" value="C:endoplasmic reticulum membrane"/>
    <property type="evidence" value="ECO:0007669"/>
    <property type="project" value="UniProtKB-SubCell"/>
</dbReference>
<dbReference type="InterPro" id="IPR022049">
    <property type="entry name" value="FAM69_kinase_dom"/>
</dbReference>
<dbReference type="InterPro" id="IPR029244">
    <property type="entry name" value="FAM69_N"/>
</dbReference>
<dbReference type="PANTHER" id="PTHR21093:SF3">
    <property type="entry name" value="DIVERGENT PROTEIN KINASE DOMAIN 1B"/>
    <property type="match status" value="1"/>
</dbReference>
<dbReference type="PANTHER" id="PTHR21093">
    <property type="entry name" value="DIVERGENT PROTEIN KINASE DOMAIN 1C-RELATED"/>
    <property type="match status" value="1"/>
</dbReference>
<dbReference type="Pfam" id="PF12260">
    <property type="entry name" value="PIP49_C"/>
    <property type="match status" value="1"/>
</dbReference>
<dbReference type="Pfam" id="PF14875">
    <property type="entry name" value="PIP49_N"/>
    <property type="match status" value="1"/>
</dbReference>
<dbReference type="SMART" id="SM01299">
    <property type="entry name" value="PIP49_N"/>
    <property type="match status" value="1"/>
</dbReference>
<reference key="1">
    <citation type="journal article" date="2000" name="Biochem. Biophys. Res. Commun.">
        <title>Growth suppression of Escherichia coli by induction of expression of mammalian genes with transmembrane or ATPase domains.</title>
        <authorList>
            <person name="Inoue S."/>
            <person name="Sano H."/>
            <person name="Ohta M."/>
        </authorList>
    </citation>
    <scope>NUCLEOTIDE SEQUENCE [MRNA]</scope>
    <source>
        <tissue>Brain</tissue>
    </source>
</reference>
<reference key="2">
    <citation type="journal article" date="2000" name="Mol. Cell Biol. Res. Commun.">
        <title>Cloning and expression of the mouse PIP49 (pancreatitis induced protein 49) mRNA which encodes a new putative transmembrane protein activated in the pancreas with acute pancreatitis.</title>
        <authorList>
            <person name="Samir A.A."/>
            <person name="Ropolo A."/>
            <person name="Grasso D."/>
            <person name="Tomasini R."/>
            <person name="Dagorn J.-C."/>
            <person name="Dusetti N."/>
            <person name="Iovanna J.L."/>
            <person name="Vaccaro M.I."/>
        </authorList>
    </citation>
    <scope>NUCLEOTIDE SEQUENCE [MRNA]</scope>
    <scope>TISSUE SPECIFICITY</scope>
</reference>
<reference key="3">
    <citation type="journal article" date="2005" name="Science">
        <title>The transcriptional landscape of the mammalian genome.</title>
        <authorList>
            <person name="Carninci P."/>
            <person name="Kasukawa T."/>
            <person name="Katayama S."/>
            <person name="Gough J."/>
            <person name="Frith M.C."/>
            <person name="Maeda N."/>
            <person name="Oyama R."/>
            <person name="Ravasi T."/>
            <person name="Lenhard B."/>
            <person name="Wells C."/>
            <person name="Kodzius R."/>
            <person name="Shimokawa K."/>
            <person name="Bajic V.B."/>
            <person name="Brenner S.E."/>
            <person name="Batalov S."/>
            <person name="Forrest A.R."/>
            <person name="Zavolan M."/>
            <person name="Davis M.J."/>
            <person name="Wilming L.G."/>
            <person name="Aidinis V."/>
            <person name="Allen J.E."/>
            <person name="Ambesi-Impiombato A."/>
            <person name="Apweiler R."/>
            <person name="Aturaliya R.N."/>
            <person name="Bailey T.L."/>
            <person name="Bansal M."/>
            <person name="Baxter L."/>
            <person name="Beisel K.W."/>
            <person name="Bersano T."/>
            <person name="Bono H."/>
            <person name="Chalk A.M."/>
            <person name="Chiu K.P."/>
            <person name="Choudhary V."/>
            <person name="Christoffels A."/>
            <person name="Clutterbuck D.R."/>
            <person name="Crowe M.L."/>
            <person name="Dalla E."/>
            <person name="Dalrymple B.P."/>
            <person name="de Bono B."/>
            <person name="Della Gatta G."/>
            <person name="di Bernardo D."/>
            <person name="Down T."/>
            <person name="Engstrom P."/>
            <person name="Fagiolini M."/>
            <person name="Faulkner G."/>
            <person name="Fletcher C.F."/>
            <person name="Fukushima T."/>
            <person name="Furuno M."/>
            <person name="Futaki S."/>
            <person name="Gariboldi M."/>
            <person name="Georgii-Hemming P."/>
            <person name="Gingeras T.R."/>
            <person name="Gojobori T."/>
            <person name="Green R.E."/>
            <person name="Gustincich S."/>
            <person name="Harbers M."/>
            <person name="Hayashi Y."/>
            <person name="Hensch T.K."/>
            <person name="Hirokawa N."/>
            <person name="Hill D."/>
            <person name="Huminiecki L."/>
            <person name="Iacono M."/>
            <person name="Ikeo K."/>
            <person name="Iwama A."/>
            <person name="Ishikawa T."/>
            <person name="Jakt M."/>
            <person name="Kanapin A."/>
            <person name="Katoh M."/>
            <person name="Kawasawa Y."/>
            <person name="Kelso J."/>
            <person name="Kitamura H."/>
            <person name="Kitano H."/>
            <person name="Kollias G."/>
            <person name="Krishnan S.P."/>
            <person name="Kruger A."/>
            <person name="Kummerfeld S.K."/>
            <person name="Kurochkin I.V."/>
            <person name="Lareau L.F."/>
            <person name="Lazarevic D."/>
            <person name="Lipovich L."/>
            <person name="Liu J."/>
            <person name="Liuni S."/>
            <person name="McWilliam S."/>
            <person name="Madan Babu M."/>
            <person name="Madera M."/>
            <person name="Marchionni L."/>
            <person name="Matsuda H."/>
            <person name="Matsuzawa S."/>
            <person name="Miki H."/>
            <person name="Mignone F."/>
            <person name="Miyake S."/>
            <person name="Morris K."/>
            <person name="Mottagui-Tabar S."/>
            <person name="Mulder N."/>
            <person name="Nakano N."/>
            <person name="Nakauchi H."/>
            <person name="Ng P."/>
            <person name="Nilsson R."/>
            <person name="Nishiguchi S."/>
            <person name="Nishikawa S."/>
            <person name="Nori F."/>
            <person name="Ohara O."/>
            <person name="Okazaki Y."/>
            <person name="Orlando V."/>
            <person name="Pang K.C."/>
            <person name="Pavan W.J."/>
            <person name="Pavesi G."/>
            <person name="Pesole G."/>
            <person name="Petrovsky N."/>
            <person name="Piazza S."/>
            <person name="Reed J."/>
            <person name="Reid J.F."/>
            <person name="Ring B.Z."/>
            <person name="Ringwald M."/>
            <person name="Rost B."/>
            <person name="Ruan Y."/>
            <person name="Salzberg S.L."/>
            <person name="Sandelin A."/>
            <person name="Schneider C."/>
            <person name="Schoenbach C."/>
            <person name="Sekiguchi K."/>
            <person name="Semple C.A."/>
            <person name="Seno S."/>
            <person name="Sessa L."/>
            <person name="Sheng Y."/>
            <person name="Shibata Y."/>
            <person name="Shimada H."/>
            <person name="Shimada K."/>
            <person name="Silva D."/>
            <person name="Sinclair B."/>
            <person name="Sperling S."/>
            <person name="Stupka E."/>
            <person name="Sugiura K."/>
            <person name="Sultana R."/>
            <person name="Takenaka Y."/>
            <person name="Taki K."/>
            <person name="Tammoja K."/>
            <person name="Tan S.L."/>
            <person name="Tang S."/>
            <person name="Taylor M.S."/>
            <person name="Tegner J."/>
            <person name="Teichmann S.A."/>
            <person name="Ueda H.R."/>
            <person name="van Nimwegen E."/>
            <person name="Verardo R."/>
            <person name="Wei C.L."/>
            <person name="Yagi K."/>
            <person name="Yamanishi H."/>
            <person name="Zabarovsky E."/>
            <person name="Zhu S."/>
            <person name="Zimmer A."/>
            <person name="Hide W."/>
            <person name="Bult C."/>
            <person name="Grimmond S.M."/>
            <person name="Teasdale R.D."/>
            <person name="Liu E.T."/>
            <person name="Brusic V."/>
            <person name="Quackenbush J."/>
            <person name="Wahlestedt C."/>
            <person name="Mattick J.S."/>
            <person name="Hume D.A."/>
            <person name="Kai C."/>
            <person name="Sasaki D."/>
            <person name="Tomaru Y."/>
            <person name="Fukuda S."/>
            <person name="Kanamori-Katayama M."/>
            <person name="Suzuki M."/>
            <person name="Aoki J."/>
            <person name="Arakawa T."/>
            <person name="Iida J."/>
            <person name="Imamura K."/>
            <person name="Itoh M."/>
            <person name="Kato T."/>
            <person name="Kawaji H."/>
            <person name="Kawagashira N."/>
            <person name="Kawashima T."/>
            <person name="Kojima M."/>
            <person name="Kondo S."/>
            <person name="Konno H."/>
            <person name="Nakano K."/>
            <person name="Ninomiya N."/>
            <person name="Nishio T."/>
            <person name="Okada M."/>
            <person name="Plessy C."/>
            <person name="Shibata K."/>
            <person name="Shiraki T."/>
            <person name="Suzuki S."/>
            <person name="Tagami M."/>
            <person name="Waki K."/>
            <person name="Watahiki A."/>
            <person name="Okamura-Oho Y."/>
            <person name="Suzuki H."/>
            <person name="Kawai J."/>
            <person name="Hayashizaki Y."/>
        </authorList>
    </citation>
    <scope>NUCLEOTIDE SEQUENCE [LARGE SCALE MRNA]</scope>
    <source>
        <strain>C57BL/6J</strain>
        <tissue>Corpora quadrigemina</tissue>
    </source>
</reference>
<reference key="4">
    <citation type="journal article" date="2009" name="PLoS Biol.">
        <title>Lineage-specific biology revealed by a finished genome assembly of the mouse.</title>
        <authorList>
            <person name="Church D.M."/>
            <person name="Goodstadt L."/>
            <person name="Hillier L.W."/>
            <person name="Zody M.C."/>
            <person name="Goldstein S."/>
            <person name="She X."/>
            <person name="Bult C.J."/>
            <person name="Agarwala R."/>
            <person name="Cherry J.L."/>
            <person name="DiCuccio M."/>
            <person name="Hlavina W."/>
            <person name="Kapustin Y."/>
            <person name="Meric P."/>
            <person name="Maglott D."/>
            <person name="Birtle Z."/>
            <person name="Marques A.C."/>
            <person name="Graves T."/>
            <person name="Zhou S."/>
            <person name="Teague B."/>
            <person name="Potamousis K."/>
            <person name="Churas C."/>
            <person name="Place M."/>
            <person name="Herschleb J."/>
            <person name="Runnheim R."/>
            <person name="Forrest D."/>
            <person name="Amos-Landgraf J."/>
            <person name="Schwartz D.C."/>
            <person name="Cheng Z."/>
            <person name="Lindblad-Toh K."/>
            <person name="Eichler E.E."/>
            <person name="Ponting C.P."/>
        </authorList>
    </citation>
    <scope>NUCLEOTIDE SEQUENCE [LARGE SCALE GENOMIC DNA]</scope>
    <source>
        <strain>C57BL/6J</strain>
    </source>
</reference>
<reference key="5">
    <citation type="journal article" date="2004" name="Genome Res.">
        <title>The status, quality, and expansion of the NIH full-length cDNA project: the Mammalian Gene Collection (MGC).</title>
        <authorList>
            <consortium name="The MGC Project Team"/>
        </authorList>
    </citation>
    <scope>NUCLEOTIDE SEQUENCE [LARGE SCALE MRNA] OF 12-431</scope>
    <source>
        <strain>C57BL/6J</strain>
        <tissue>Brain</tissue>
    </source>
</reference>
<reference key="6">
    <citation type="journal article" date="2011" name="Biochem. Biophys. Res. Commun.">
        <title>Characterisation of the FAM69 family of cysteine-rich endoplasmic reticulum proteins.</title>
        <authorList>
            <person name="Tennant-Eyles A.J."/>
            <person name="Moffitt H."/>
            <person name="Whitehouse C.A."/>
            <person name="Roberts R.G."/>
        </authorList>
    </citation>
    <scope>SUBCELLULAR LOCATION</scope>
    <scope>DISULFIDE BONDS</scope>
    <scope>TISSUE SPECIFICITY</scope>
</reference>
<gene>
    <name type="primary">Dipk1b</name>
    <name type="synonym">Fam69b</name>
    <name type="synonym">Pip49</name>
</gene>
<sequence length="431" mass="48792">MRRLRRLVHLVLLCPFSKGLQGRLPGLRVKYVLLVWLGIFVGSWMVYVHYSSYSELCRGHVCQVVICDQYRKGIISGSVCQDLCELQKVEWRTCLSSAPGQQVYSGLWQDKEVTIKCGIEEALNSKAWPDAAPRRELVLFDKPTRGTSIKEFREMTLSFLKANLGDLPSLPALVDQILLMADFNKDSRVSLAEAKSVWALLQRNEFLLLLSLQEKEHASRLLGYCGDLYLTEGIPHGSWHGAVLLPALRPLLPSVLHRALQQWFGPAWPWRAKIAIGLLEFVEELFHGSYGTFYMCETTLANVGYTATYDFKMADLQQVAPEATVRRFLQGRHCEQSSDCIYGRDCRAPCDRLMRQCKGDLIQPNLAKVCELLRDYLLPGAPAGLYEELGKQLRTCTTLSGLASQIEAHHSLVLSHLKTLLWREISNTNYS</sequence>
<accession>Q99ML4</accession>
<accession>Q0VG43</accession>
<accession>Q80UM6</accession>
<accession>Q9JMG0</accession>
<feature type="chain" id="PRO_0000287232" description="Divergent protein kinase domain 1B">
    <location>
        <begin position="1"/>
        <end position="431"/>
    </location>
</feature>
<feature type="topological domain" description="Cytoplasmic" evidence="1">
    <location>
        <begin position="1"/>
        <end position="30"/>
    </location>
</feature>
<feature type="transmembrane region" description="Helical" evidence="1">
    <location>
        <begin position="31"/>
        <end position="51"/>
    </location>
</feature>
<feature type="topological domain" description="Lumenal" evidence="1">
    <location>
        <begin position="52"/>
        <end position="431"/>
    </location>
</feature>
<feature type="short sequence motif" description="May mediate ER retention">
    <location>
        <begin position="5"/>
        <end position="6"/>
    </location>
</feature>
<feature type="disulfide bond" evidence="5">
    <location>
        <begin position="57"/>
        <end position="94"/>
    </location>
</feature>
<feature type="disulfide bond" evidence="5">
    <location>
        <begin position="62"/>
        <end position="117"/>
    </location>
</feature>
<feature type="sequence conflict" description="In Ref. 1; BAA92750." evidence="4" ref="1">
    <original>L</original>
    <variation>K</variation>
    <location>
        <position position="399"/>
    </location>
</feature>
<organism>
    <name type="scientific">Mus musculus</name>
    <name type="common">Mouse</name>
    <dbReference type="NCBI Taxonomy" id="10090"/>
    <lineage>
        <taxon>Eukaryota</taxon>
        <taxon>Metazoa</taxon>
        <taxon>Chordata</taxon>
        <taxon>Craniata</taxon>
        <taxon>Vertebrata</taxon>
        <taxon>Euteleostomi</taxon>
        <taxon>Mammalia</taxon>
        <taxon>Eutheria</taxon>
        <taxon>Euarchontoglires</taxon>
        <taxon>Glires</taxon>
        <taxon>Rodentia</taxon>
        <taxon>Myomorpha</taxon>
        <taxon>Muroidea</taxon>
        <taxon>Muridae</taxon>
        <taxon>Murinae</taxon>
        <taxon>Mus</taxon>
        <taxon>Mus</taxon>
    </lineage>
</organism>